<feature type="chain" id="PRO_0000432079" description="Immunity protein CdiI">
    <location>
        <begin position="1"/>
        <end position="79"/>
    </location>
</feature>
<feature type="transmembrane region" description="Helical; Name=1" evidence="1">
    <location>
        <begin position="12"/>
        <end position="32"/>
    </location>
</feature>
<feature type="transmembrane region" description="Helical; Name=2" evidence="1">
    <location>
        <begin position="51"/>
        <end position="71"/>
    </location>
</feature>
<keyword id="KW-0997">Cell inner membrane</keyword>
<keyword id="KW-1003">Cell membrane</keyword>
<keyword id="KW-0472">Membrane</keyword>
<keyword id="KW-0812">Transmembrane</keyword>
<keyword id="KW-1133">Transmembrane helix</keyword>
<name>CDII_ECOLX</name>
<evidence type="ECO:0000255" key="1"/>
<evidence type="ECO:0000269" key="2">
    <source>
    </source>
</evidence>
<evidence type="ECO:0000269" key="3">
    <source>
    </source>
</evidence>
<evidence type="ECO:0000269" key="4">
    <source>
    </source>
</evidence>
<evidence type="ECO:0000269" key="5">
    <source>
    </source>
</evidence>
<evidence type="ECO:0000303" key="6">
    <source>
    </source>
</evidence>
<evidence type="ECO:0000305" key="7">
    <source>
    </source>
</evidence>
<gene>
    <name evidence="6" type="primary">cdiI</name>
</gene>
<proteinExistence type="inferred from homology"/>
<reference key="1">
    <citation type="journal article" date="2005" name="Science">
        <title>Contact-dependent inhibition of growth in Escherichia coli.</title>
        <authorList>
            <person name="Aoki S.K."/>
            <person name="Pamma R."/>
            <person name="Hernday A.D."/>
            <person name="Bickham J.E."/>
            <person name="Braaten B.A."/>
            <person name="Low D.A."/>
        </authorList>
    </citation>
    <scope>NUCLEOTIDE SEQUENCE [GENOMIC DNA]</scope>
    <scope>FUNCTION</scope>
    <source>
        <strain>EC93</strain>
    </source>
</reference>
<reference key="2">
    <citation type="journal article" date="2009" name="J. Bacteriol.">
        <title>Contact-dependent growth inhibition causes reversible metabolic downregulation in Escherichia coli.</title>
        <authorList>
            <person name="Aoki S.K."/>
            <person name="Webb J.S."/>
            <person name="Braaten B.A."/>
            <person name="Low D.A."/>
        </authorList>
    </citation>
    <scope>FUNCTION</scope>
    <source>
        <strain>EC93</strain>
    </source>
</reference>
<reference key="3">
    <citation type="journal article" date="2010" name="Nature">
        <title>A widespread family of polymorphic contact-dependent toxin delivery systems in bacteria.</title>
        <authorList>
            <person name="Aoki S.K."/>
            <person name="Diner E.J."/>
            <person name="de Roodenbeke C.T."/>
            <person name="Burgess B.R."/>
            <person name="Poole S.J."/>
            <person name="Braaten B.A."/>
            <person name="Jones A.M."/>
            <person name="Webb J.S."/>
            <person name="Hayes C.S."/>
            <person name="Cotter P.A."/>
            <person name="Low D.A."/>
        </authorList>
    </citation>
    <scope>FUNCTION</scope>
    <scope>STRAIN SPECIFICITY</scope>
    <source>
        <strain>EC93</strain>
    </source>
</reference>
<reference key="4">
    <citation type="journal article" date="2013" name="MBio">
        <title>Receptor polymorphism restricts contact-dependent growth inhibition to members of the same species.</title>
        <authorList>
            <person name="Ruhe Z.C."/>
            <person name="Wallace A.B."/>
            <person name="Low D.A."/>
            <person name="Hayes C.S."/>
        </authorList>
    </citation>
    <scope>FUNCTION</scope>
    <scope>STRAIN SPECIFICITY</scope>
    <source>
        <strain>EC93</strain>
    </source>
</reference>
<organism>
    <name type="scientific">Escherichia coli</name>
    <dbReference type="NCBI Taxonomy" id="562"/>
    <lineage>
        <taxon>Bacteria</taxon>
        <taxon>Pseudomonadati</taxon>
        <taxon>Pseudomonadota</taxon>
        <taxon>Gammaproteobacteria</taxon>
        <taxon>Enterobacterales</taxon>
        <taxon>Enterobacteriaceae</taxon>
        <taxon>Escherichia</taxon>
    </lineage>
</organism>
<accession>Q3YL95</accession>
<protein>
    <recommendedName>
        <fullName evidence="6">Immunity protein CdiI</fullName>
    </recommendedName>
</protein>
<comment type="function">
    <text evidence="2 3 4 5">Immunity protein component of a toxin-immunity protein module, which functions as a cellular contact-dependent growth inhibition (CDI) system. CDI modules allow bacteria to communicate with and inhibit the growth of closely related neighboring bacteria in a contact-dependent fashion. Protects cells against CdiA from the same strain, its cognate toxin protein (PubMed:16109881, PubMed:23882017). Growth inhibition is reversible upon induction of this protein, occurring about 2.5 hours after induction, and requires an energy source (PubMed:19124575). Does not protect against non-cognate CdiA from E.coli strain 563 / UPEC, D.dadantii strain 3937 or Y.pestis strain CO92 (PubMed:21085179).</text>
</comment>
<comment type="subunit">
    <text evidence="7">Probably interacts with cognate toxin CdiA.</text>
</comment>
<comment type="subcellular location">
    <subcellularLocation>
        <location evidence="1">Cell inner membrane</location>
        <topology evidence="1">Multi-pass membrane protein</topology>
    </subcellularLocation>
</comment>
<dbReference type="EMBL" id="DQ100454">
    <property type="protein sequence ID" value="AAZ57199.1"/>
    <property type="molecule type" value="Genomic_DNA"/>
</dbReference>
<dbReference type="RefSeq" id="WP_154813344.1">
    <property type="nucleotide sequence ID" value="NZ_CP061330.1"/>
</dbReference>
<dbReference type="GO" id="GO:0005886">
    <property type="term" value="C:plasma membrane"/>
    <property type="evidence" value="ECO:0007669"/>
    <property type="project" value="UniProtKB-SubCell"/>
</dbReference>
<sequence length="79" mass="8856">MKKKLFALLKYIIFFPMLCTVLGLLGIPIGLIVNFLRTGSFDFNLKDEIDVVLFTLKIGIPIGFILGLGLWGLSILDRK</sequence>